<feature type="chain" id="PRO_0000286292" description="Spermidine/putrescine import ATP-binding protein PotA">
    <location>
        <begin position="1"/>
        <end position="364"/>
    </location>
</feature>
<feature type="domain" description="ABC transporter" evidence="1">
    <location>
        <begin position="5"/>
        <end position="235"/>
    </location>
</feature>
<feature type="binding site" evidence="1">
    <location>
        <begin position="37"/>
        <end position="44"/>
    </location>
    <ligand>
        <name>ATP</name>
        <dbReference type="ChEBI" id="CHEBI:30616"/>
    </ligand>
</feature>
<comment type="function">
    <text evidence="1">Part of the ABC transporter complex PotABCD involved in spermidine/putrescine import. Responsible for energy coupling to the transport system.</text>
</comment>
<comment type="catalytic activity">
    <reaction evidence="1">
        <text>ATP + H2O + polyamine-[polyamine-binding protein]Side 1 = ADP + phosphate + polyamineSide 2 + [polyamine-binding protein]Side 1.</text>
        <dbReference type="EC" id="7.6.2.11"/>
    </reaction>
</comment>
<comment type="subunit">
    <text evidence="1">The complex is composed of two ATP-binding proteins (PotA), two transmembrane proteins (PotB and PotC) and a solute-binding protein (PotD).</text>
</comment>
<comment type="subcellular location">
    <subcellularLocation>
        <location evidence="1">Cell membrane</location>
        <topology evidence="1">Peripheral membrane protein</topology>
    </subcellularLocation>
</comment>
<comment type="similarity">
    <text evidence="1">Belongs to the ABC transporter superfamily. Spermidine/putrescine importer (TC 3.A.1.11.1) family.</text>
</comment>
<name>POTA_STAA8</name>
<gene>
    <name evidence="1" type="primary">potA</name>
    <name type="ordered locus">SAOUHSC_01046</name>
</gene>
<reference key="1">
    <citation type="book" date="2006" name="Gram positive pathogens, 2nd edition">
        <title>The Staphylococcus aureus NCTC 8325 genome.</title>
        <editorList>
            <person name="Fischetti V."/>
            <person name="Novick R."/>
            <person name="Ferretti J."/>
            <person name="Portnoy D."/>
            <person name="Rood J."/>
        </editorList>
        <authorList>
            <person name="Gillaspy A.F."/>
            <person name="Worrell V."/>
            <person name="Orvis J."/>
            <person name="Roe B.A."/>
            <person name="Dyer D.W."/>
            <person name="Iandolo J.J."/>
        </authorList>
    </citation>
    <scope>NUCLEOTIDE SEQUENCE [LARGE SCALE GENOMIC DNA]</scope>
    <source>
        <strain>NCTC 8325 / PS 47</strain>
    </source>
</reference>
<proteinExistence type="inferred from homology"/>
<accession>Q2G2A7</accession>
<keyword id="KW-0067">ATP-binding</keyword>
<keyword id="KW-1003">Cell membrane</keyword>
<keyword id="KW-0472">Membrane</keyword>
<keyword id="KW-0547">Nucleotide-binding</keyword>
<keyword id="KW-1185">Reference proteome</keyword>
<keyword id="KW-1278">Translocase</keyword>
<keyword id="KW-0813">Transport</keyword>
<dbReference type="EC" id="7.6.2.11" evidence="1"/>
<dbReference type="EMBL" id="CP000253">
    <property type="protein sequence ID" value="ABD30166.1"/>
    <property type="molecule type" value="Genomic_DNA"/>
</dbReference>
<dbReference type="RefSeq" id="WP_000433551.1">
    <property type="nucleotide sequence ID" value="NZ_LS483365.1"/>
</dbReference>
<dbReference type="RefSeq" id="YP_499595.1">
    <property type="nucleotide sequence ID" value="NC_007795.1"/>
</dbReference>
<dbReference type="SMR" id="Q2G2A7"/>
<dbReference type="STRING" id="93061.SAOUHSC_01046"/>
<dbReference type="PaxDb" id="1280-SAXN108_1096"/>
<dbReference type="GeneID" id="3919894"/>
<dbReference type="KEGG" id="sao:SAOUHSC_01046"/>
<dbReference type="PATRIC" id="fig|93061.5.peg.961"/>
<dbReference type="eggNOG" id="COG3842">
    <property type="taxonomic scope" value="Bacteria"/>
</dbReference>
<dbReference type="HOGENOM" id="CLU_000604_1_1_9"/>
<dbReference type="OrthoDB" id="9790614at2"/>
<dbReference type="PRO" id="PR:Q2G2A7"/>
<dbReference type="Proteomes" id="UP000008816">
    <property type="component" value="Chromosome"/>
</dbReference>
<dbReference type="GO" id="GO:0043190">
    <property type="term" value="C:ATP-binding cassette (ABC) transporter complex"/>
    <property type="evidence" value="ECO:0007669"/>
    <property type="project" value="InterPro"/>
</dbReference>
<dbReference type="GO" id="GO:0015417">
    <property type="term" value="F:ABC-type polyamine transporter activity"/>
    <property type="evidence" value="ECO:0007669"/>
    <property type="project" value="UniProtKB-EC"/>
</dbReference>
<dbReference type="GO" id="GO:0005524">
    <property type="term" value="F:ATP binding"/>
    <property type="evidence" value="ECO:0007669"/>
    <property type="project" value="UniProtKB-KW"/>
</dbReference>
<dbReference type="GO" id="GO:0016887">
    <property type="term" value="F:ATP hydrolysis activity"/>
    <property type="evidence" value="ECO:0007669"/>
    <property type="project" value="InterPro"/>
</dbReference>
<dbReference type="FunFam" id="3.40.50.300:FF:000133">
    <property type="entry name" value="Spermidine/putrescine import ATP-binding protein PotA"/>
    <property type="match status" value="1"/>
</dbReference>
<dbReference type="Gene3D" id="2.40.50.100">
    <property type="match status" value="1"/>
</dbReference>
<dbReference type="Gene3D" id="3.40.50.300">
    <property type="entry name" value="P-loop containing nucleotide triphosphate hydrolases"/>
    <property type="match status" value="1"/>
</dbReference>
<dbReference type="InterPro" id="IPR003593">
    <property type="entry name" value="AAA+_ATPase"/>
</dbReference>
<dbReference type="InterPro" id="IPR050093">
    <property type="entry name" value="ABC_SmlMolc_Importer"/>
</dbReference>
<dbReference type="InterPro" id="IPR003439">
    <property type="entry name" value="ABC_transporter-like_ATP-bd"/>
</dbReference>
<dbReference type="InterPro" id="IPR017871">
    <property type="entry name" value="ABC_transporter-like_CS"/>
</dbReference>
<dbReference type="InterPro" id="IPR008995">
    <property type="entry name" value="Mo/tungstate-bd_C_term_dom"/>
</dbReference>
<dbReference type="InterPro" id="IPR027417">
    <property type="entry name" value="P-loop_NTPase"/>
</dbReference>
<dbReference type="InterPro" id="IPR013611">
    <property type="entry name" value="Transp-assoc_OB_typ2"/>
</dbReference>
<dbReference type="PANTHER" id="PTHR42781">
    <property type="entry name" value="SPERMIDINE/PUTRESCINE IMPORT ATP-BINDING PROTEIN POTA"/>
    <property type="match status" value="1"/>
</dbReference>
<dbReference type="PANTHER" id="PTHR42781:SF4">
    <property type="entry name" value="SPERMIDINE_PUTRESCINE IMPORT ATP-BINDING PROTEIN POTA"/>
    <property type="match status" value="1"/>
</dbReference>
<dbReference type="Pfam" id="PF00005">
    <property type="entry name" value="ABC_tran"/>
    <property type="match status" value="1"/>
</dbReference>
<dbReference type="Pfam" id="PF08402">
    <property type="entry name" value="TOBE_2"/>
    <property type="match status" value="1"/>
</dbReference>
<dbReference type="SMART" id="SM00382">
    <property type="entry name" value="AAA"/>
    <property type="match status" value="1"/>
</dbReference>
<dbReference type="SUPFAM" id="SSF50331">
    <property type="entry name" value="MOP-like"/>
    <property type="match status" value="1"/>
</dbReference>
<dbReference type="SUPFAM" id="SSF52540">
    <property type="entry name" value="P-loop containing nucleoside triphosphate hydrolases"/>
    <property type="match status" value="1"/>
</dbReference>
<dbReference type="PROSITE" id="PS00211">
    <property type="entry name" value="ABC_TRANSPORTER_1"/>
    <property type="match status" value="1"/>
</dbReference>
<dbReference type="PROSITE" id="PS50893">
    <property type="entry name" value="ABC_TRANSPORTER_2"/>
    <property type="match status" value="1"/>
</dbReference>
<dbReference type="PROSITE" id="PS51305">
    <property type="entry name" value="POTA"/>
    <property type="match status" value="1"/>
</dbReference>
<sequence>MEPLLSLKSVSKSYDDLNILDDIDIDIESGYFYTLLGPSGCGKTTILKLIAGFEYPDSGEVIYQNKPIGNLPPNKRKVNTVFQDYALFPHLNVYDNIAFGLKLKKLSKTEIDQKVTEALKLVKLSGYEKRNINEMSGGQKQRVAIARAIVNEPEILLLDESLSALDLKLRTEMQYELRELQSRLGITFIFVTHDQEEALALSDFLFVLKDGKIQQFGTPTDIYDEPVNRFVADFIGESNIVEGRMVRDYVVNIYGQDFECVDMGIPENKKVEVVIRPEDISLIKAEEGLFKATVDSMLFRGVHYEICCIDNKGYEWVIQTTKKAEVGSEVGLYFDPEAIHIMVPGETEEEFDKRIESYEEVDNA</sequence>
<evidence type="ECO:0000255" key="1">
    <source>
        <dbReference type="HAMAP-Rule" id="MF_01726"/>
    </source>
</evidence>
<organism>
    <name type="scientific">Staphylococcus aureus (strain NCTC 8325 / PS 47)</name>
    <dbReference type="NCBI Taxonomy" id="93061"/>
    <lineage>
        <taxon>Bacteria</taxon>
        <taxon>Bacillati</taxon>
        <taxon>Bacillota</taxon>
        <taxon>Bacilli</taxon>
        <taxon>Bacillales</taxon>
        <taxon>Staphylococcaceae</taxon>
        <taxon>Staphylococcus</taxon>
    </lineage>
</organism>
<protein>
    <recommendedName>
        <fullName evidence="1">Spermidine/putrescine import ATP-binding protein PotA</fullName>
        <ecNumber evidence="1">7.6.2.11</ecNumber>
    </recommendedName>
</protein>